<dbReference type="EC" id="2.7.1.21" evidence="1"/>
<dbReference type="EMBL" id="CP001114">
    <property type="protein sequence ID" value="ACO45520.1"/>
    <property type="molecule type" value="Genomic_DNA"/>
</dbReference>
<dbReference type="RefSeq" id="WP_012692643.1">
    <property type="nucleotide sequence ID" value="NC_012526.1"/>
</dbReference>
<dbReference type="SMR" id="C1D0Z6"/>
<dbReference type="STRING" id="546414.Deide_06660"/>
<dbReference type="PaxDb" id="546414-Deide_06660"/>
<dbReference type="KEGG" id="ddr:Deide_06660"/>
<dbReference type="eggNOG" id="COG1435">
    <property type="taxonomic scope" value="Bacteria"/>
</dbReference>
<dbReference type="HOGENOM" id="CLU_064400_3_0_0"/>
<dbReference type="OrthoDB" id="9781579at2"/>
<dbReference type="Proteomes" id="UP000002208">
    <property type="component" value="Chromosome"/>
</dbReference>
<dbReference type="GO" id="GO:0005829">
    <property type="term" value="C:cytosol"/>
    <property type="evidence" value="ECO:0007669"/>
    <property type="project" value="TreeGrafter"/>
</dbReference>
<dbReference type="GO" id="GO:0005524">
    <property type="term" value="F:ATP binding"/>
    <property type="evidence" value="ECO:0007669"/>
    <property type="project" value="UniProtKB-UniRule"/>
</dbReference>
<dbReference type="GO" id="GO:0004797">
    <property type="term" value="F:thymidine kinase activity"/>
    <property type="evidence" value="ECO:0007669"/>
    <property type="project" value="UniProtKB-UniRule"/>
</dbReference>
<dbReference type="GO" id="GO:0008270">
    <property type="term" value="F:zinc ion binding"/>
    <property type="evidence" value="ECO:0007669"/>
    <property type="project" value="UniProtKB-UniRule"/>
</dbReference>
<dbReference type="GO" id="GO:0071897">
    <property type="term" value="P:DNA biosynthetic process"/>
    <property type="evidence" value="ECO:0007669"/>
    <property type="project" value="UniProtKB-KW"/>
</dbReference>
<dbReference type="GO" id="GO:0046104">
    <property type="term" value="P:thymidine metabolic process"/>
    <property type="evidence" value="ECO:0007669"/>
    <property type="project" value="TreeGrafter"/>
</dbReference>
<dbReference type="FunFam" id="3.30.60.20:FF:000026">
    <property type="entry name" value="Thymidine kinase"/>
    <property type="match status" value="1"/>
</dbReference>
<dbReference type="Gene3D" id="3.30.60.20">
    <property type="match status" value="1"/>
</dbReference>
<dbReference type="Gene3D" id="3.40.50.300">
    <property type="entry name" value="P-loop containing nucleotide triphosphate hydrolases"/>
    <property type="match status" value="1"/>
</dbReference>
<dbReference type="HAMAP" id="MF_00124">
    <property type="entry name" value="Thymidine_kinase"/>
    <property type="match status" value="1"/>
</dbReference>
<dbReference type="InterPro" id="IPR027417">
    <property type="entry name" value="P-loop_NTPase"/>
</dbReference>
<dbReference type="InterPro" id="IPR001267">
    <property type="entry name" value="Thymidine_kinase"/>
</dbReference>
<dbReference type="InterPro" id="IPR020633">
    <property type="entry name" value="Thymidine_kinase_CS"/>
</dbReference>
<dbReference type="NCBIfam" id="NF003296">
    <property type="entry name" value="PRK04296.1-1"/>
    <property type="match status" value="1"/>
</dbReference>
<dbReference type="PANTHER" id="PTHR11441">
    <property type="entry name" value="THYMIDINE KINASE"/>
    <property type="match status" value="1"/>
</dbReference>
<dbReference type="PANTHER" id="PTHR11441:SF0">
    <property type="entry name" value="THYMIDINE KINASE, CYTOSOLIC"/>
    <property type="match status" value="1"/>
</dbReference>
<dbReference type="Pfam" id="PF00265">
    <property type="entry name" value="TK"/>
    <property type="match status" value="1"/>
</dbReference>
<dbReference type="PIRSF" id="PIRSF035805">
    <property type="entry name" value="TK_cell"/>
    <property type="match status" value="1"/>
</dbReference>
<dbReference type="SUPFAM" id="SSF57716">
    <property type="entry name" value="Glucocorticoid receptor-like (DNA-binding domain)"/>
    <property type="match status" value="1"/>
</dbReference>
<dbReference type="SUPFAM" id="SSF52540">
    <property type="entry name" value="P-loop containing nucleoside triphosphate hydrolases"/>
    <property type="match status" value="1"/>
</dbReference>
<dbReference type="PROSITE" id="PS00603">
    <property type="entry name" value="TK_CELLULAR_TYPE"/>
    <property type="match status" value="1"/>
</dbReference>
<comment type="catalytic activity">
    <reaction evidence="1">
        <text>thymidine + ATP = dTMP + ADP + H(+)</text>
        <dbReference type="Rhea" id="RHEA:19129"/>
        <dbReference type="ChEBI" id="CHEBI:15378"/>
        <dbReference type="ChEBI" id="CHEBI:17748"/>
        <dbReference type="ChEBI" id="CHEBI:30616"/>
        <dbReference type="ChEBI" id="CHEBI:63528"/>
        <dbReference type="ChEBI" id="CHEBI:456216"/>
        <dbReference type="EC" id="2.7.1.21"/>
    </reaction>
</comment>
<comment type="subunit">
    <text evidence="1">Homotetramer.</text>
</comment>
<comment type="subcellular location">
    <subcellularLocation>
        <location evidence="1">Cytoplasm</location>
    </subcellularLocation>
</comment>
<comment type="similarity">
    <text evidence="1">Belongs to the thymidine kinase family.</text>
</comment>
<keyword id="KW-0067">ATP-binding</keyword>
<keyword id="KW-0963">Cytoplasm</keyword>
<keyword id="KW-0237">DNA synthesis</keyword>
<keyword id="KW-0418">Kinase</keyword>
<keyword id="KW-0479">Metal-binding</keyword>
<keyword id="KW-0547">Nucleotide-binding</keyword>
<keyword id="KW-1185">Reference proteome</keyword>
<keyword id="KW-0808">Transferase</keyword>
<keyword id="KW-0862">Zinc</keyword>
<protein>
    <recommendedName>
        <fullName evidence="1">Thymidine kinase</fullName>
        <ecNumber evidence="1">2.7.1.21</ecNumber>
    </recommendedName>
</protein>
<evidence type="ECO:0000255" key="1">
    <source>
        <dbReference type="HAMAP-Rule" id="MF_00124"/>
    </source>
</evidence>
<sequence length="202" mass="21720">MLKSPYSGGHLEVIVGPMFSGKSEELIRRVTRALIARQRVQVFKPAVDDRYHESAVASHAGRTVGALAVGDVADIRAHLSGEAPLLQASAEMPDVIGIDEVQFFGPELVPLALELADAGVRVILAGLDLDFRAEPFGCMPDLLARAESVEKLTAICTQCGAPATRSQRLISGEPARFDDPVVLVGALESYEARCRLHHVVTR</sequence>
<accession>C1D0Z6</accession>
<name>KITH_DEIDV</name>
<proteinExistence type="inferred from homology"/>
<organism>
    <name type="scientific">Deinococcus deserti (strain DSM 17065 / CIP 109153 / LMG 22923 / VCD115)</name>
    <dbReference type="NCBI Taxonomy" id="546414"/>
    <lineage>
        <taxon>Bacteria</taxon>
        <taxon>Thermotogati</taxon>
        <taxon>Deinococcota</taxon>
        <taxon>Deinococci</taxon>
        <taxon>Deinococcales</taxon>
        <taxon>Deinococcaceae</taxon>
        <taxon>Deinococcus</taxon>
    </lineage>
</organism>
<feature type="chain" id="PRO_1000203110" description="Thymidine kinase">
    <location>
        <begin position="1"/>
        <end position="202"/>
    </location>
</feature>
<feature type="active site" description="Proton acceptor" evidence="1">
    <location>
        <position position="100"/>
    </location>
</feature>
<feature type="binding site" evidence="1">
    <location>
        <begin position="16"/>
        <end position="23"/>
    </location>
    <ligand>
        <name>ATP</name>
        <dbReference type="ChEBI" id="CHEBI:30616"/>
    </ligand>
</feature>
<feature type="binding site" evidence="1">
    <location>
        <begin position="99"/>
        <end position="102"/>
    </location>
    <ligand>
        <name>ATP</name>
        <dbReference type="ChEBI" id="CHEBI:30616"/>
    </ligand>
</feature>
<feature type="binding site" evidence="1">
    <location>
        <position position="156"/>
    </location>
    <ligand>
        <name>Zn(2+)</name>
        <dbReference type="ChEBI" id="CHEBI:29105"/>
    </ligand>
</feature>
<feature type="binding site" evidence="1">
    <location>
        <position position="159"/>
    </location>
    <ligand>
        <name>Zn(2+)</name>
        <dbReference type="ChEBI" id="CHEBI:29105"/>
    </ligand>
</feature>
<feature type="binding site" evidence="1">
    <location>
        <position position="194"/>
    </location>
    <ligand>
        <name>Zn(2+)</name>
        <dbReference type="ChEBI" id="CHEBI:29105"/>
    </ligand>
</feature>
<feature type="binding site" evidence="1">
    <location>
        <position position="197"/>
    </location>
    <ligand>
        <name>Zn(2+)</name>
        <dbReference type="ChEBI" id="CHEBI:29105"/>
    </ligand>
</feature>
<gene>
    <name evidence="1" type="primary">tdk</name>
    <name type="ordered locus">Deide_06660</name>
</gene>
<reference key="1">
    <citation type="journal article" date="2009" name="PLoS Genet.">
        <title>Alliance of proteomics and genomics to unravel the specificities of Sahara bacterium Deinococcus deserti.</title>
        <authorList>
            <person name="de Groot A."/>
            <person name="Dulermo R."/>
            <person name="Ortet P."/>
            <person name="Blanchard L."/>
            <person name="Guerin P."/>
            <person name="Fernandez B."/>
            <person name="Vacherie B."/>
            <person name="Dossat C."/>
            <person name="Jolivet E."/>
            <person name="Siguier P."/>
            <person name="Chandler M."/>
            <person name="Barakat M."/>
            <person name="Dedieu A."/>
            <person name="Barbe V."/>
            <person name="Heulin T."/>
            <person name="Sommer S."/>
            <person name="Achouak W."/>
            <person name="Armengaud J."/>
        </authorList>
    </citation>
    <scope>NUCLEOTIDE SEQUENCE [LARGE SCALE GENOMIC DNA]</scope>
    <source>
        <strain>DSM 17065 / CIP 109153 / LMG 22923 / VCD115</strain>
    </source>
</reference>